<comment type="function">
    <text evidence="1">This protein binds specifically to 23S rRNA; its binding is stimulated by other ribosomal proteins, e.g. L4, L17, and L20. It is important during the early stages of 50S assembly. It makes multiple contacts with different domains of the 23S rRNA in the assembled 50S subunit and ribosome (By similarity).</text>
</comment>
<comment type="function">
    <text evidence="1">The globular domain of the protein is located near the polypeptide exit tunnel on the outside of the subunit, while an extended beta-hairpin is found that lines the wall of the exit tunnel in the center of the 70S ribosome.</text>
</comment>
<comment type="subunit">
    <text evidence="1">Part of the 50S ribosomal subunit.</text>
</comment>
<comment type="similarity">
    <text evidence="1">Belongs to the universal ribosomal protein uL22 family.</text>
</comment>
<reference key="1">
    <citation type="submission" date="2008-05" db="EMBL/GenBank/DDBJ databases">
        <title>Complete sequence of Chlorobium limicola DSM 245.</title>
        <authorList>
            <consortium name="US DOE Joint Genome Institute"/>
            <person name="Lucas S."/>
            <person name="Copeland A."/>
            <person name="Lapidus A."/>
            <person name="Glavina del Rio T."/>
            <person name="Dalin E."/>
            <person name="Tice H."/>
            <person name="Bruce D."/>
            <person name="Goodwin L."/>
            <person name="Pitluck S."/>
            <person name="Schmutz J."/>
            <person name="Larimer F."/>
            <person name="Land M."/>
            <person name="Hauser L."/>
            <person name="Kyrpides N."/>
            <person name="Ovchinnikova G."/>
            <person name="Zhao F."/>
            <person name="Li T."/>
            <person name="Liu Z."/>
            <person name="Overmann J."/>
            <person name="Bryant D.A."/>
            <person name="Richardson P."/>
        </authorList>
    </citation>
    <scope>NUCLEOTIDE SEQUENCE [LARGE SCALE GENOMIC DNA]</scope>
    <source>
        <strain>DSM 245 / NBRC 103803 / 6330</strain>
    </source>
</reference>
<protein>
    <recommendedName>
        <fullName evidence="1">Large ribosomal subunit protein uL22</fullName>
    </recommendedName>
    <alternativeName>
        <fullName evidence="2">50S ribosomal protein L22</fullName>
    </alternativeName>
</protein>
<proteinExistence type="inferred from homology"/>
<name>RL22_CHLL2</name>
<feature type="chain" id="PRO_0000354456" description="Large ribosomal subunit protein uL22">
    <location>
        <begin position="1"/>
        <end position="118"/>
    </location>
</feature>
<keyword id="KW-0687">Ribonucleoprotein</keyword>
<keyword id="KW-0689">Ribosomal protein</keyword>
<keyword id="KW-0694">RNA-binding</keyword>
<keyword id="KW-0699">rRNA-binding</keyword>
<sequence>MQAKAILRHTPTSPRKMRLLAGLVRGKPVDQAKAILLNSTKGASRNVMLTLKSAVANYAQLNPDERVSDQELVVKEVFVDQGATLKRMLPAPMGRAYRVRKRSNHLTVIVDKVKQSSK</sequence>
<gene>
    <name evidence="1" type="primary">rplV</name>
    <name type="ordered locus">Clim_2224</name>
</gene>
<dbReference type="EMBL" id="CP001097">
    <property type="protein sequence ID" value="ACD91248.1"/>
    <property type="molecule type" value="Genomic_DNA"/>
</dbReference>
<dbReference type="RefSeq" id="WP_012467115.1">
    <property type="nucleotide sequence ID" value="NC_010803.1"/>
</dbReference>
<dbReference type="SMR" id="B3EGY5"/>
<dbReference type="STRING" id="290315.Clim_2224"/>
<dbReference type="KEGG" id="cli:Clim_2224"/>
<dbReference type="eggNOG" id="COG0091">
    <property type="taxonomic scope" value="Bacteria"/>
</dbReference>
<dbReference type="HOGENOM" id="CLU_083987_3_3_10"/>
<dbReference type="OrthoDB" id="9805969at2"/>
<dbReference type="Proteomes" id="UP000008841">
    <property type="component" value="Chromosome"/>
</dbReference>
<dbReference type="GO" id="GO:0022625">
    <property type="term" value="C:cytosolic large ribosomal subunit"/>
    <property type="evidence" value="ECO:0007669"/>
    <property type="project" value="TreeGrafter"/>
</dbReference>
<dbReference type="GO" id="GO:0019843">
    <property type="term" value="F:rRNA binding"/>
    <property type="evidence" value="ECO:0007669"/>
    <property type="project" value="UniProtKB-UniRule"/>
</dbReference>
<dbReference type="GO" id="GO:0003735">
    <property type="term" value="F:structural constituent of ribosome"/>
    <property type="evidence" value="ECO:0007669"/>
    <property type="project" value="InterPro"/>
</dbReference>
<dbReference type="GO" id="GO:0006412">
    <property type="term" value="P:translation"/>
    <property type="evidence" value="ECO:0007669"/>
    <property type="project" value="UniProtKB-UniRule"/>
</dbReference>
<dbReference type="CDD" id="cd00336">
    <property type="entry name" value="Ribosomal_L22"/>
    <property type="match status" value="1"/>
</dbReference>
<dbReference type="Gene3D" id="3.90.470.10">
    <property type="entry name" value="Ribosomal protein L22/L17"/>
    <property type="match status" value="1"/>
</dbReference>
<dbReference type="HAMAP" id="MF_01331_B">
    <property type="entry name" value="Ribosomal_uL22_B"/>
    <property type="match status" value="1"/>
</dbReference>
<dbReference type="InterPro" id="IPR001063">
    <property type="entry name" value="Ribosomal_uL22"/>
</dbReference>
<dbReference type="InterPro" id="IPR005727">
    <property type="entry name" value="Ribosomal_uL22_bac/chlpt-type"/>
</dbReference>
<dbReference type="InterPro" id="IPR047867">
    <property type="entry name" value="Ribosomal_uL22_bac/org-type"/>
</dbReference>
<dbReference type="InterPro" id="IPR036394">
    <property type="entry name" value="Ribosomal_uL22_sf"/>
</dbReference>
<dbReference type="NCBIfam" id="TIGR01044">
    <property type="entry name" value="rplV_bact"/>
    <property type="match status" value="1"/>
</dbReference>
<dbReference type="PANTHER" id="PTHR13501">
    <property type="entry name" value="CHLOROPLAST 50S RIBOSOMAL PROTEIN L22-RELATED"/>
    <property type="match status" value="1"/>
</dbReference>
<dbReference type="PANTHER" id="PTHR13501:SF8">
    <property type="entry name" value="LARGE RIBOSOMAL SUBUNIT PROTEIN UL22M"/>
    <property type="match status" value="1"/>
</dbReference>
<dbReference type="Pfam" id="PF00237">
    <property type="entry name" value="Ribosomal_L22"/>
    <property type="match status" value="1"/>
</dbReference>
<dbReference type="SUPFAM" id="SSF54843">
    <property type="entry name" value="Ribosomal protein L22"/>
    <property type="match status" value="1"/>
</dbReference>
<evidence type="ECO:0000255" key="1">
    <source>
        <dbReference type="HAMAP-Rule" id="MF_01331"/>
    </source>
</evidence>
<evidence type="ECO:0000305" key="2"/>
<accession>B3EGY5</accession>
<organism>
    <name type="scientific">Chlorobium limicola (strain DSM 245 / NBRC 103803 / 6330)</name>
    <dbReference type="NCBI Taxonomy" id="290315"/>
    <lineage>
        <taxon>Bacteria</taxon>
        <taxon>Pseudomonadati</taxon>
        <taxon>Chlorobiota</taxon>
        <taxon>Chlorobiia</taxon>
        <taxon>Chlorobiales</taxon>
        <taxon>Chlorobiaceae</taxon>
        <taxon>Chlorobium/Pelodictyon group</taxon>
        <taxon>Chlorobium</taxon>
    </lineage>
</organism>